<accession>Q5N2Q6</accession>
<comment type="function">
    <text evidence="1">Catalyzes the last two sequential reactions in the de novo biosynthetic pathway for UDP-N-acetylglucosamine (UDP-GlcNAc). The C-terminal domain catalyzes the transfer of acetyl group from acetyl coenzyme A to glucosamine-1-phosphate (GlcN-1-P) to produce N-acetylglucosamine-1-phosphate (GlcNAc-1-P), which is converted into UDP-GlcNAc by the transfer of uridine 5-monophosphate (from uridine 5-triphosphate), a reaction catalyzed by the N-terminal domain.</text>
</comment>
<comment type="catalytic activity">
    <reaction evidence="1">
        <text>alpha-D-glucosamine 1-phosphate + acetyl-CoA = N-acetyl-alpha-D-glucosamine 1-phosphate + CoA + H(+)</text>
        <dbReference type="Rhea" id="RHEA:13725"/>
        <dbReference type="ChEBI" id="CHEBI:15378"/>
        <dbReference type="ChEBI" id="CHEBI:57287"/>
        <dbReference type="ChEBI" id="CHEBI:57288"/>
        <dbReference type="ChEBI" id="CHEBI:57776"/>
        <dbReference type="ChEBI" id="CHEBI:58516"/>
        <dbReference type="EC" id="2.3.1.157"/>
    </reaction>
</comment>
<comment type="catalytic activity">
    <reaction evidence="1">
        <text>N-acetyl-alpha-D-glucosamine 1-phosphate + UTP + H(+) = UDP-N-acetyl-alpha-D-glucosamine + diphosphate</text>
        <dbReference type="Rhea" id="RHEA:13509"/>
        <dbReference type="ChEBI" id="CHEBI:15378"/>
        <dbReference type="ChEBI" id="CHEBI:33019"/>
        <dbReference type="ChEBI" id="CHEBI:46398"/>
        <dbReference type="ChEBI" id="CHEBI:57705"/>
        <dbReference type="ChEBI" id="CHEBI:57776"/>
        <dbReference type="EC" id="2.7.7.23"/>
    </reaction>
</comment>
<comment type="cofactor">
    <cofactor evidence="1">
        <name>Mg(2+)</name>
        <dbReference type="ChEBI" id="CHEBI:18420"/>
    </cofactor>
    <text evidence="1">Binds 1 Mg(2+) ion per subunit.</text>
</comment>
<comment type="pathway">
    <text evidence="1">Nucleotide-sugar biosynthesis; UDP-N-acetyl-alpha-D-glucosamine biosynthesis; N-acetyl-alpha-D-glucosamine 1-phosphate from alpha-D-glucosamine 6-phosphate (route II): step 2/2.</text>
</comment>
<comment type="pathway">
    <text evidence="1">Nucleotide-sugar biosynthesis; UDP-N-acetyl-alpha-D-glucosamine biosynthesis; UDP-N-acetyl-alpha-D-glucosamine from N-acetyl-alpha-D-glucosamine 1-phosphate: step 1/1.</text>
</comment>
<comment type="pathway">
    <text evidence="1">Bacterial outer membrane biogenesis; LPS lipid A biosynthesis.</text>
</comment>
<comment type="subunit">
    <text evidence="1">Homotrimer.</text>
</comment>
<comment type="subcellular location">
    <subcellularLocation>
        <location evidence="1">Cytoplasm</location>
    </subcellularLocation>
</comment>
<comment type="similarity">
    <text evidence="1">In the N-terminal section; belongs to the N-acetylglucosamine-1-phosphate uridyltransferase family.</text>
</comment>
<comment type="similarity">
    <text evidence="1">In the C-terminal section; belongs to the transferase hexapeptide repeat family.</text>
</comment>
<protein>
    <recommendedName>
        <fullName evidence="1">Bifunctional protein GlmU</fullName>
    </recommendedName>
    <domain>
        <recommendedName>
            <fullName evidence="1">UDP-N-acetylglucosamine pyrophosphorylase</fullName>
            <ecNumber evidence="1">2.7.7.23</ecNumber>
        </recommendedName>
        <alternativeName>
            <fullName evidence="1">N-acetylglucosamine-1-phosphate uridyltransferase</fullName>
        </alternativeName>
    </domain>
    <domain>
        <recommendedName>
            <fullName evidence="1">Glucosamine-1-phosphate N-acetyltransferase</fullName>
            <ecNumber evidence="1">2.3.1.157</ecNumber>
        </recommendedName>
    </domain>
</protein>
<reference key="1">
    <citation type="journal article" date="2007" name="Photosyn. Res.">
        <title>Complete nucleotide sequence of the freshwater unicellular cyanobacterium Synechococcus elongatus PCC 6301 chromosome: gene content and organization.</title>
        <authorList>
            <person name="Sugita C."/>
            <person name="Ogata K."/>
            <person name="Shikata M."/>
            <person name="Jikuya H."/>
            <person name="Takano J."/>
            <person name="Furumichi M."/>
            <person name="Kanehisa M."/>
            <person name="Omata T."/>
            <person name="Sugiura M."/>
            <person name="Sugita M."/>
        </authorList>
    </citation>
    <scope>NUCLEOTIDE SEQUENCE [LARGE SCALE GENOMIC DNA]</scope>
    <source>
        <strain>ATCC 27144 / PCC 6301 / SAUG 1402/1</strain>
    </source>
</reference>
<keyword id="KW-0012">Acyltransferase</keyword>
<keyword id="KW-0133">Cell shape</keyword>
<keyword id="KW-0961">Cell wall biogenesis/degradation</keyword>
<keyword id="KW-0963">Cytoplasm</keyword>
<keyword id="KW-0460">Magnesium</keyword>
<keyword id="KW-0479">Metal-binding</keyword>
<keyword id="KW-0511">Multifunctional enzyme</keyword>
<keyword id="KW-0548">Nucleotidyltransferase</keyword>
<keyword id="KW-0573">Peptidoglycan synthesis</keyword>
<keyword id="KW-0677">Repeat</keyword>
<keyword id="KW-0808">Transferase</keyword>
<proteinExistence type="inferred from homology"/>
<feature type="chain" id="PRO_0000233863" description="Bifunctional protein GlmU">
    <location>
        <begin position="1"/>
        <end position="452"/>
    </location>
</feature>
<feature type="region of interest" description="Pyrophosphorylase" evidence="1">
    <location>
        <begin position="1"/>
        <end position="226"/>
    </location>
</feature>
<feature type="region of interest" description="Linker" evidence="1">
    <location>
        <begin position="227"/>
        <end position="247"/>
    </location>
</feature>
<feature type="region of interest" description="N-acetyltransferase" evidence="1">
    <location>
        <begin position="248"/>
        <end position="452"/>
    </location>
</feature>
<feature type="active site" description="Proton acceptor" evidence="1">
    <location>
        <position position="359"/>
    </location>
</feature>
<feature type="binding site" evidence="1">
    <location>
        <begin position="7"/>
        <end position="10"/>
    </location>
    <ligand>
        <name>UDP-N-acetyl-alpha-D-glucosamine</name>
        <dbReference type="ChEBI" id="CHEBI:57705"/>
    </ligand>
</feature>
<feature type="binding site" evidence="1">
    <location>
        <position position="21"/>
    </location>
    <ligand>
        <name>UDP-N-acetyl-alpha-D-glucosamine</name>
        <dbReference type="ChEBI" id="CHEBI:57705"/>
    </ligand>
</feature>
<feature type="binding site" evidence="1">
    <location>
        <position position="73"/>
    </location>
    <ligand>
        <name>UDP-N-acetyl-alpha-D-glucosamine</name>
        <dbReference type="ChEBI" id="CHEBI:57705"/>
    </ligand>
</feature>
<feature type="binding site" evidence="1">
    <location>
        <begin position="78"/>
        <end position="79"/>
    </location>
    <ligand>
        <name>UDP-N-acetyl-alpha-D-glucosamine</name>
        <dbReference type="ChEBI" id="CHEBI:57705"/>
    </ligand>
</feature>
<feature type="binding site" evidence="1">
    <location>
        <position position="103"/>
    </location>
    <ligand>
        <name>Mg(2+)</name>
        <dbReference type="ChEBI" id="CHEBI:18420"/>
    </ligand>
</feature>
<feature type="binding site" evidence="1">
    <location>
        <position position="140"/>
    </location>
    <ligand>
        <name>UDP-N-acetyl-alpha-D-glucosamine</name>
        <dbReference type="ChEBI" id="CHEBI:57705"/>
    </ligand>
</feature>
<feature type="binding site" evidence="1">
    <location>
        <position position="155"/>
    </location>
    <ligand>
        <name>UDP-N-acetyl-alpha-D-glucosamine</name>
        <dbReference type="ChEBI" id="CHEBI:57705"/>
    </ligand>
</feature>
<feature type="binding site" evidence="1">
    <location>
        <position position="170"/>
    </location>
    <ligand>
        <name>UDP-N-acetyl-alpha-D-glucosamine</name>
        <dbReference type="ChEBI" id="CHEBI:57705"/>
    </ligand>
</feature>
<feature type="binding site" evidence="1">
    <location>
        <position position="224"/>
    </location>
    <ligand>
        <name>Mg(2+)</name>
        <dbReference type="ChEBI" id="CHEBI:18420"/>
    </ligand>
</feature>
<feature type="binding site" evidence="1">
    <location>
        <position position="224"/>
    </location>
    <ligand>
        <name>UDP-N-acetyl-alpha-D-glucosamine</name>
        <dbReference type="ChEBI" id="CHEBI:57705"/>
    </ligand>
</feature>
<feature type="binding site" evidence="1">
    <location>
        <position position="329"/>
    </location>
    <ligand>
        <name>UDP-N-acetyl-alpha-D-glucosamine</name>
        <dbReference type="ChEBI" id="CHEBI:57705"/>
    </ligand>
</feature>
<feature type="binding site" evidence="1">
    <location>
        <position position="347"/>
    </location>
    <ligand>
        <name>UDP-N-acetyl-alpha-D-glucosamine</name>
        <dbReference type="ChEBI" id="CHEBI:57705"/>
    </ligand>
</feature>
<feature type="binding site" evidence="1">
    <location>
        <position position="362"/>
    </location>
    <ligand>
        <name>UDP-N-acetyl-alpha-D-glucosamine</name>
        <dbReference type="ChEBI" id="CHEBI:57705"/>
    </ligand>
</feature>
<feature type="binding site" evidence="1">
    <location>
        <position position="373"/>
    </location>
    <ligand>
        <name>UDP-N-acetyl-alpha-D-glucosamine</name>
        <dbReference type="ChEBI" id="CHEBI:57705"/>
    </ligand>
</feature>
<feature type="binding site" evidence="1">
    <location>
        <position position="376"/>
    </location>
    <ligand>
        <name>acetyl-CoA</name>
        <dbReference type="ChEBI" id="CHEBI:57288"/>
    </ligand>
</feature>
<feature type="binding site" evidence="1">
    <location>
        <begin position="382"/>
        <end position="383"/>
    </location>
    <ligand>
        <name>acetyl-CoA</name>
        <dbReference type="ChEBI" id="CHEBI:57288"/>
    </ligand>
</feature>
<feature type="binding site" evidence="1">
    <location>
        <position position="419"/>
    </location>
    <ligand>
        <name>acetyl-CoA</name>
        <dbReference type="ChEBI" id="CHEBI:57288"/>
    </ligand>
</feature>
<feature type="binding site" evidence="1">
    <location>
        <position position="436"/>
    </location>
    <ligand>
        <name>acetyl-CoA</name>
        <dbReference type="ChEBI" id="CHEBI:57288"/>
    </ligand>
</feature>
<name>GLMU_SYNP6</name>
<evidence type="ECO:0000255" key="1">
    <source>
        <dbReference type="HAMAP-Rule" id="MF_01631"/>
    </source>
</evidence>
<organism>
    <name type="scientific">Synechococcus sp. (strain ATCC 27144 / PCC 6301 / SAUG 1402/1)</name>
    <name type="common">Anacystis nidulans</name>
    <dbReference type="NCBI Taxonomy" id="269084"/>
    <lineage>
        <taxon>Bacteria</taxon>
        <taxon>Bacillati</taxon>
        <taxon>Cyanobacteriota</taxon>
        <taxon>Cyanophyceae</taxon>
        <taxon>Synechococcales</taxon>
        <taxon>Synechococcaceae</taxon>
        <taxon>Synechococcus</taxon>
    </lineage>
</organism>
<sequence>MVAVAILAAGKGTRMKSQLPKVLHRLGSQTLLDRVLASLTPLNVDRCFVIVGYQGDRVRESWAHRTDIEFVEQTQQLGTGHAVQQLLPHLKGYQGDLLVLNGDVPLLRGETLEALVSGHQRSGAAATLLTAQLNQPKGYGRVFCDATSRVCEIIEDRDCTPAQRQNPRVNAGVYCFRWPDLEAVLPNLSTANDQQEYYLTEAITYLDPVSAVEVADSQEILGINDRLQLADSFRILQERIRQQWMLAGVTLVDPTSITIDETVQLGTDVVIEPQTHLRGNTVIGNNCSIGPNSLITNSQIGDGVTVQMSVISDSTIAANSKIGPFAHLRGAAAIGEACRIGNFVEVKKSTVGDRTNVAHLSYLGDATLGQRVNVGAGTITANYDGVSKHPTVIGDRSKTGANSVLVAPVTIGQDVTIAAGSTINKDVPDGALAIARSRQTIHENWSTPTTEQ</sequence>
<dbReference type="EC" id="2.7.7.23" evidence="1"/>
<dbReference type="EC" id="2.3.1.157" evidence="1"/>
<dbReference type="EMBL" id="AP008231">
    <property type="protein sequence ID" value="BAD79414.1"/>
    <property type="molecule type" value="Genomic_DNA"/>
</dbReference>
<dbReference type="RefSeq" id="WP_011243536.1">
    <property type="nucleotide sequence ID" value="NZ_CP085785.1"/>
</dbReference>
<dbReference type="SMR" id="Q5N2Q6"/>
<dbReference type="GeneID" id="72429103"/>
<dbReference type="KEGG" id="syc:syc1224_d"/>
<dbReference type="eggNOG" id="COG1207">
    <property type="taxonomic scope" value="Bacteria"/>
</dbReference>
<dbReference type="UniPathway" id="UPA00113">
    <property type="reaction ID" value="UER00532"/>
</dbReference>
<dbReference type="UniPathway" id="UPA00113">
    <property type="reaction ID" value="UER00533"/>
</dbReference>
<dbReference type="UniPathway" id="UPA00973"/>
<dbReference type="Proteomes" id="UP000001175">
    <property type="component" value="Chromosome"/>
</dbReference>
<dbReference type="GO" id="GO:0031470">
    <property type="term" value="C:carboxysome"/>
    <property type="evidence" value="ECO:0007669"/>
    <property type="project" value="UniProtKB-ARBA"/>
</dbReference>
<dbReference type="GO" id="GO:0005737">
    <property type="term" value="C:cytoplasm"/>
    <property type="evidence" value="ECO:0007669"/>
    <property type="project" value="UniProtKB-SubCell"/>
</dbReference>
<dbReference type="GO" id="GO:0016020">
    <property type="term" value="C:membrane"/>
    <property type="evidence" value="ECO:0007669"/>
    <property type="project" value="GOC"/>
</dbReference>
<dbReference type="GO" id="GO:0019134">
    <property type="term" value="F:glucosamine-1-phosphate N-acetyltransferase activity"/>
    <property type="evidence" value="ECO:0007669"/>
    <property type="project" value="UniProtKB-UniRule"/>
</dbReference>
<dbReference type="GO" id="GO:0000287">
    <property type="term" value="F:magnesium ion binding"/>
    <property type="evidence" value="ECO:0007669"/>
    <property type="project" value="UniProtKB-UniRule"/>
</dbReference>
<dbReference type="GO" id="GO:0043886">
    <property type="term" value="F:structural constituent of carboxysome shell"/>
    <property type="evidence" value="ECO:0007669"/>
    <property type="project" value="UniProtKB-ARBA"/>
</dbReference>
<dbReference type="GO" id="GO:0003977">
    <property type="term" value="F:UDP-N-acetylglucosamine diphosphorylase activity"/>
    <property type="evidence" value="ECO:0007669"/>
    <property type="project" value="UniProtKB-UniRule"/>
</dbReference>
<dbReference type="GO" id="GO:0000902">
    <property type="term" value="P:cell morphogenesis"/>
    <property type="evidence" value="ECO:0007669"/>
    <property type="project" value="UniProtKB-UniRule"/>
</dbReference>
<dbReference type="GO" id="GO:0071555">
    <property type="term" value="P:cell wall organization"/>
    <property type="evidence" value="ECO:0007669"/>
    <property type="project" value="UniProtKB-KW"/>
</dbReference>
<dbReference type="GO" id="GO:0009245">
    <property type="term" value="P:lipid A biosynthetic process"/>
    <property type="evidence" value="ECO:0007669"/>
    <property type="project" value="UniProtKB-UniRule"/>
</dbReference>
<dbReference type="GO" id="GO:0009252">
    <property type="term" value="P:peptidoglycan biosynthetic process"/>
    <property type="evidence" value="ECO:0007669"/>
    <property type="project" value="UniProtKB-UniRule"/>
</dbReference>
<dbReference type="GO" id="GO:0008360">
    <property type="term" value="P:regulation of cell shape"/>
    <property type="evidence" value="ECO:0007669"/>
    <property type="project" value="UniProtKB-KW"/>
</dbReference>
<dbReference type="GO" id="GO:0006048">
    <property type="term" value="P:UDP-N-acetylglucosamine biosynthetic process"/>
    <property type="evidence" value="ECO:0007669"/>
    <property type="project" value="UniProtKB-UniPathway"/>
</dbReference>
<dbReference type="CDD" id="cd02540">
    <property type="entry name" value="GT2_GlmU_N_bac"/>
    <property type="match status" value="1"/>
</dbReference>
<dbReference type="CDD" id="cd03353">
    <property type="entry name" value="LbH_GlmU_C"/>
    <property type="match status" value="1"/>
</dbReference>
<dbReference type="Gene3D" id="2.160.10.10">
    <property type="entry name" value="Hexapeptide repeat proteins"/>
    <property type="match status" value="1"/>
</dbReference>
<dbReference type="Gene3D" id="3.90.550.10">
    <property type="entry name" value="Spore Coat Polysaccharide Biosynthesis Protein SpsA, Chain A"/>
    <property type="match status" value="1"/>
</dbReference>
<dbReference type="HAMAP" id="MF_01631">
    <property type="entry name" value="GlmU"/>
    <property type="match status" value="1"/>
</dbReference>
<dbReference type="InterPro" id="IPR005882">
    <property type="entry name" value="Bifunctional_GlmU"/>
</dbReference>
<dbReference type="InterPro" id="IPR050065">
    <property type="entry name" value="GlmU-like"/>
</dbReference>
<dbReference type="InterPro" id="IPR038009">
    <property type="entry name" value="GlmU_C_LbH"/>
</dbReference>
<dbReference type="InterPro" id="IPR001451">
    <property type="entry name" value="Hexapep"/>
</dbReference>
<dbReference type="InterPro" id="IPR025877">
    <property type="entry name" value="MobA-like_NTP_Trfase"/>
</dbReference>
<dbReference type="InterPro" id="IPR029044">
    <property type="entry name" value="Nucleotide-diphossugar_trans"/>
</dbReference>
<dbReference type="InterPro" id="IPR011004">
    <property type="entry name" value="Trimer_LpxA-like_sf"/>
</dbReference>
<dbReference type="NCBIfam" id="TIGR01173">
    <property type="entry name" value="glmU"/>
    <property type="match status" value="1"/>
</dbReference>
<dbReference type="NCBIfam" id="NF010940">
    <property type="entry name" value="PRK14360.1"/>
    <property type="match status" value="1"/>
</dbReference>
<dbReference type="PANTHER" id="PTHR43584:SF3">
    <property type="entry name" value="BIFUNCTIONAL PROTEIN GLMU"/>
    <property type="match status" value="1"/>
</dbReference>
<dbReference type="PANTHER" id="PTHR43584">
    <property type="entry name" value="NUCLEOTIDYL TRANSFERASE"/>
    <property type="match status" value="1"/>
</dbReference>
<dbReference type="Pfam" id="PF00132">
    <property type="entry name" value="Hexapep"/>
    <property type="match status" value="3"/>
</dbReference>
<dbReference type="Pfam" id="PF12804">
    <property type="entry name" value="NTP_transf_3"/>
    <property type="match status" value="1"/>
</dbReference>
<dbReference type="SUPFAM" id="SSF53448">
    <property type="entry name" value="Nucleotide-diphospho-sugar transferases"/>
    <property type="match status" value="1"/>
</dbReference>
<dbReference type="SUPFAM" id="SSF51161">
    <property type="entry name" value="Trimeric LpxA-like enzymes"/>
    <property type="match status" value="1"/>
</dbReference>
<gene>
    <name evidence="1" type="primary">glmU</name>
    <name type="ordered locus">syc1224_d</name>
</gene>